<gene>
    <name type="primary">vps-26</name>
    <name type="ORF">T20D3.7</name>
</gene>
<feature type="chain" id="PRO_0000073010" description="Vacuolar protein sorting-associated protein 26">
    <location>
        <begin position="1"/>
        <end position="356"/>
    </location>
</feature>
<feature type="region of interest" description="Disordered" evidence="2">
    <location>
        <begin position="301"/>
        <end position="356"/>
    </location>
</feature>
<feature type="compositionally biased region" description="Polar residues" evidence="2">
    <location>
        <begin position="315"/>
        <end position="324"/>
    </location>
</feature>
<feature type="compositionally biased region" description="Basic and acidic residues" evidence="2">
    <location>
        <begin position="331"/>
        <end position="342"/>
    </location>
</feature>
<dbReference type="EMBL" id="Z68220">
    <property type="protein sequence ID" value="CAA92489.2"/>
    <property type="status" value="ALT_INIT"/>
    <property type="molecule type" value="Genomic_DNA"/>
</dbReference>
<dbReference type="PIR" id="T25029">
    <property type="entry name" value="T25029"/>
</dbReference>
<dbReference type="RefSeq" id="NP_001129871.1">
    <property type="nucleotide sequence ID" value="NM_001136399.3"/>
</dbReference>
<dbReference type="RefSeq" id="NP_501644.1">
    <property type="nucleotide sequence ID" value="NM_069243.3"/>
</dbReference>
<dbReference type="SMR" id="O01258"/>
<dbReference type="BioGRID" id="42870">
    <property type="interactions" value="2"/>
</dbReference>
<dbReference type="FunCoup" id="O01258">
    <property type="interactions" value="3764"/>
</dbReference>
<dbReference type="STRING" id="6239.T20D3.7c.1"/>
<dbReference type="PaxDb" id="6239-T20D3.7c"/>
<dbReference type="EnsemblMetazoa" id="T20D3.7a.1">
    <property type="protein sequence ID" value="T20D3.7a.1"/>
    <property type="gene ID" value="WBGene00006931"/>
</dbReference>
<dbReference type="GeneID" id="177764"/>
<dbReference type="KEGG" id="cel:CELE_T20D3.7"/>
<dbReference type="UCSC" id="T20D3.7">
    <property type="organism name" value="c. elegans"/>
</dbReference>
<dbReference type="AGR" id="WB:WBGene00006931"/>
<dbReference type="CTD" id="177764"/>
<dbReference type="WormBase" id="T20D3.7a">
    <property type="protein sequence ID" value="CE28684"/>
    <property type="gene ID" value="WBGene00006931"/>
    <property type="gene designation" value="vps-26"/>
</dbReference>
<dbReference type="eggNOG" id="KOG3063">
    <property type="taxonomic scope" value="Eukaryota"/>
</dbReference>
<dbReference type="GeneTree" id="ENSGT00950000183064"/>
<dbReference type="HOGENOM" id="CLU_031077_2_0_1"/>
<dbReference type="InParanoid" id="O01258"/>
<dbReference type="OrthoDB" id="3821113at2759"/>
<dbReference type="PhylomeDB" id="O01258"/>
<dbReference type="Reactome" id="R-CEL-3238698">
    <property type="pathway name" value="WNT ligand biogenesis and trafficking"/>
</dbReference>
<dbReference type="PRO" id="PR:O01258"/>
<dbReference type="Proteomes" id="UP000001940">
    <property type="component" value="Chromosome IV"/>
</dbReference>
<dbReference type="Bgee" id="WBGene00006931">
    <property type="expression patterns" value="Expressed in germ line (C elegans) and 4 other cell types or tissues"/>
</dbReference>
<dbReference type="ExpressionAtlas" id="O01258">
    <property type="expression patterns" value="baseline and differential"/>
</dbReference>
<dbReference type="GO" id="GO:0005829">
    <property type="term" value="C:cytosol"/>
    <property type="evidence" value="ECO:0000315"/>
    <property type="project" value="WormBase"/>
</dbReference>
<dbReference type="GO" id="GO:0005768">
    <property type="term" value="C:endosome"/>
    <property type="evidence" value="ECO:0000318"/>
    <property type="project" value="GO_Central"/>
</dbReference>
<dbReference type="GO" id="GO:0030904">
    <property type="term" value="C:retromer complex"/>
    <property type="evidence" value="ECO:0000318"/>
    <property type="project" value="GO_Central"/>
</dbReference>
<dbReference type="GO" id="GO:0006886">
    <property type="term" value="P:intracellular protein transport"/>
    <property type="evidence" value="ECO:0000318"/>
    <property type="project" value="GO_Central"/>
</dbReference>
<dbReference type="GO" id="GO:0042147">
    <property type="term" value="P:retrograde transport, endosome to Golgi"/>
    <property type="evidence" value="ECO:0000318"/>
    <property type="project" value="GO_Central"/>
</dbReference>
<dbReference type="FunFam" id="2.60.40.640:FF:000001">
    <property type="entry name" value="Vacuolar protein sorting-associated protein 26A"/>
    <property type="match status" value="1"/>
</dbReference>
<dbReference type="FunFam" id="2.60.40.640:FF:000002">
    <property type="entry name" value="Vacuolar protein sorting-associated protein 26A"/>
    <property type="match status" value="1"/>
</dbReference>
<dbReference type="Gene3D" id="2.60.40.640">
    <property type="match status" value="2"/>
</dbReference>
<dbReference type="InterPro" id="IPR014752">
    <property type="entry name" value="Arrestin-like_C"/>
</dbReference>
<dbReference type="InterPro" id="IPR028934">
    <property type="entry name" value="Vps26-related"/>
</dbReference>
<dbReference type="PANTHER" id="PTHR12233">
    <property type="entry name" value="VACUOLAR PROTEIN SORTING 26 RELATED"/>
    <property type="match status" value="1"/>
</dbReference>
<dbReference type="Pfam" id="PF03643">
    <property type="entry name" value="Vps26"/>
    <property type="match status" value="1"/>
</dbReference>
<comment type="function">
    <text evidence="1">May play a role in vesicular protein sorting, similar to the yeast retromer proteins.</text>
</comment>
<comment type="similarity">
    <text evidence="3">Belongs to the VPS26 family.</text>
</comment>
<comment type="sequence caution" evidence="3">
    <conflict type="erroneous initiation">
        <sequence resource="EMBL-CDS" id="CAA92489"/>
    </conflict>
</comment>
<accession>O01258</accession>
<reference key="1">
    <citation type="journal article" date="1998" name="Science">
        <title>Genome sequence of the nematode C. elegans: a platform for investigating biology.</title>
        <authorList>
            <consortium name="The C. elegans sequencing consortium"/>
        </authorList>
    </citation>
    <scope>NUCLEOTIDE SEQUENCE [LARGE SCALE GENOMIC DNA]</scope>
    <source>
        <strain>Bristol N2</strain>
    </source>
</reference>
<name>VPS26_CAEEL</name>
<proteinExistence type="inferred from homology"/>
<evidence type="ECO:0000250" key="1"/>
<evidence type="ECO:0000256" key="2">
    <source>
        <dbReference type="SAM" id="MobiDB-lite"/>
    </source>
</evidence>
<evidence type="ECO:0000305" key="3"/>
<sequence length="356" mass="40894">MAMLFGFGQSAEIQIRLSNEDTRKIVKARGDDGNMHDHFLYYDGESVTGTVHVNLKKANHKFEHQGIRIEFIGQIEVYYDRGNQQDFISLTRELARPGDLTQNAQFPFEFNNVEKPFETYMGTNVKLRYFLRVTVIRRLTDLTKELDLVVHALSSYPDNDKSIKMEVGIEDCLHIEFEYNKNKYHLQDVIVGKIYFLLVRIKIKYMEIAILKTEVVGSGPNTFKESETVAKFEIMDGAPVRGESIPIRLFLAGYDLAPSMRDVGKKFSVKYFLNLVLVDEEDRRYFKQQEVTLWRKADKVMRRPGTEDDEEEKQTTSIPGTQKFTAPAPVEHPKPESPRSDPKSGSTSPDDNSDSS</sequence>
<keyword id="KW-0653">Protein transport</keyword>
<keyword id="KW-1185">Reference proteome</keyword>
<keyword id="KW-0813">Transport</keyword>
<organism>
    <name type="scientific">Caenorhabditis elegans</name>
    <dbReference type="NCBI Taxonomy" id="6239"/>
    <lineage>
        <taxon>Eukaryota</taxon>
        <taxon>Metazoa</taxon>
        <taxon>Ecdysozoa</taxon>
        <taxon>Nematoda</taxon>
        <taxon>Chromadorea</taxon>
        <taxon>Rhabditida</taxon>
        <taxon>Rhabditina</taxon>
        <taxon>Rhabditomorpha</taxon>
        <taxon>Rhabditoidea</taxon>
        <taxon>Rhabditidae</taxon>
        <taxon>Peloderinae</taxon>
        <taxon>Caenorhabditis</taxon>
    </lineage>
</organism>
<protein>
    <recommendedName>
        <fullName>Vacuolar protein sorting-associated protein 26</fullName>
    </recommendedName>
    <alternativeName>
        <fullName>VPS26 protein homolog</fullName>
    </alternativeName>
</protein>